<reference key="1">
    <citation type="journal article" date="2007" name="Nature">
        <title>Evolution of genes and genomes on the Drosophila phylogeny.</title>
        <authorList>
            <consortium name="Drosophila 12 genomes consortium"/>
        </authorList>
    </citation>
    <scope>NUCLEOTIDE SEQUENCE [LARGE SCALE GENOMIC DNA]</scope>
    <source>
        <strain>Tucson 14021-0224.01</strain>
    </source>
</reference>
<sequence>MSTVQTVLGTITPNLLGRTLTHEHVALDFEHFYRPPPPDFECELKAKISMSTLGYVRLYPYSSKENVRFYDGEALEAAKKDVLLYKKHGGGSIVENSSYGLKRNLEFIVELAKSTGVHFIAGTGHYIHAMQDASHASLSVEQMSDLYSKDIITGLQVNGKMVKCGFIGEVASVYPIHDFEKNAIKAAGEIQEVLGCGVSMHPHRVTKAPFEIMRLYLEAGGRADKCVMSHLDRTIFDIDELLEFAKLGCYIQYDLFGTECSFYQLNTSVDMISDGQRIDNLIKLIKEGLVDKLLMSHDIHTKHRLTSYGGHGYHHIHTNILPRMFDRGVTLEQVEQMTVTNPANWLAFDP</sequence>
<name>PTER_DROER</name>
<protein>
    <recommendedName>
        <fullName>Phosphotriesterase-related protein</fullName>
        <ecNumber>3.1.-.-</ecNumber>
    </recommendedName>
    <alternativeName>
        <fullName>Parathion hydrolase-related protein</fullName>
    </alternativeName>
</protein>
<proteinExistence type="inferred from homology"/>
<keyword id="KW-0378">Hydrolase</keyword>
<keyword id="KW-0479">Metal-binding</keyword>
<accession>B3P1R1</accession>
<evidence type="ECO:0000250" key="1">
    <source>
        <dbReference type="UniProtKB" id="P45548"/>
    </source>
</evidence>
<evidence type="ECO:0000255" key="2">
    <source>
        <dbReference type="PROSITE-ProRule" id="PRU00679"/>
    </source>
</evidence>
<organism>
    <name type="scientific">Drosophila erecta</name>
    <name type="common">Fruit fly</name>
    <dbReference type="NCBI Taxonomy" id="7220"/>
    <lineage>
        <taxon>Eukaryota</taxon>
        <taxon>Metazoa</taxon>
        <taxon>Ecdysozoa</taxon>
        <taxon>Arthropoda</taxon>
        <taxon>Hexapoda</taxon>
        <taxon>Insecta</taxon>
        <taxon>Pterygota</taxon>
        <taxon>Neoptera</taxon>
        <taxon>Endopterygota</taxon>
        <taxon>Diptera</taxon>
        <taxon>Brachycera</taxon>
        <taxon>Muscomorpha</taxon>
        <taxon>Ephydroidea</taxon>
        <taxon>Drosophilidae</taxon>
        <taxon>Drosophila</taxon>
        <taxon>Sophophora</taxon>
    </lineage>
</organism>
<feature type="chain" id="PRO_0000388674" description="Phosphotriesterase-related protein">
    <location>
        <begin position="1"/>
        <end position="350"/>
    </location>
</feature>
<feature type="binding site" evidence="1">
    <location>
        <position position="22"/>
    </location>
    <ligand>
        <name>a divalent metal cation</name>
        <dbReference type="ChEBI" id="CHEBI:60240"/>
        <label>1</label>
    </ligand>
</feature>
<feature type="binding site" evidence="1">
    <location>
        <position position="24"/>
    </location>
    <ligand>
        <name>a divalent metal cation</name>
        <dbReference type="ChEBI" id="CHEBI:60240"/>
        <label>1</label>
    </ligand>
</feature>
<feature type="binding site" evidence="1">
    <location>
        <position position="169"/>
    </location>
    <ligand>
        <name>a divalent metal cation</name>
        <dbReference type="ChEBI" id="CHEBI:60240"/>
        <label>1</label>
    </ligand>
</feature>
<feature type="binding site" evidence="1">
    <location>
        <position position="169"/>
    </location>
    <ligand>
        <name>a divalent metal cation</name>
        <dbReference type="ChEBI" id="CHEBI:60240"/>
        <label>2</label>
    </ligand>
</feature>
<feature type="binding site" evidence="1">
    <location>
        <position position="201"/>
    </location>
    <ligand>
        <name>a divalent metal cation</name>
        <dbReference type="ChEBI" id="CHEBI:60240"/>
        <label>2</label>
    </ligand>
</feature>
<feature type="binding site" evidence="1">
    <location>
        <position position="230"/>
    </location>
    <ligand>
        <name>a divalent metal cation</name>
        <dbReference type="ChEBI" id="CHEBI:60240"/>
        <label>2</label>
    </ligand>
</feature>
<feature type="binding site" evidence="1">
    <location>
        <position position="298"/>
    </location>
    <ligand>
        <name>a divalent metal cation</name>
        <dbReference type="ChEBI" id="CHEBI:60240"/>
        <label>1</label>
    </ligand>
</feature>
<dbReference type="EC" id="3.1.-.-"/>
<dbReference type="EMBL" id="CH954181">
    <property type="protein sequence ID" value="EDV49799.1"/>
    <property type="molecule type" value="Genomic_DNA"/>
</dbReference>
<dbReference type="SMR" id="B3P1R1"/>
<dbReference type="EnsemblMetazoa" id="FBtr0136446">
    <property type="protein sequence ID" value="FBpp0134938"/>
    <property type="gene ID" value="FBgn0108624"/>
</dbReference>
<dbReference type="EnsemblMetazoa" id="XM_001980805.3">
    <property type="protein sequence ID" value="XP_001980841.1"/>
    <property type="gene ID" value="LOC6552545"/>
</dbReference>
<dbReference type="GeneID" id="6552545"/>
<dbReference type="KEGG" id="der:6552545"/>
<dbReference type="eggNOG" id="ENOG502QQQR">
    <property type="taxonomic scope" value="Eukaryota"/>
</dbReference>
<dbReference type="HOGENOM" id="CLU_054760_0_1_1"/>
<dbReference type="OMA" id="MVKCGFI"/>
<dbReference type="OrthoDB" id="9998343at2759"/>
<dbReference type="PhylomeDB" id="B3P1R1"/>
<dbReference type="Proteomes" id="UP000008711">
    <property type="component" value="Unassembled WGS sequence"/>
</dbReference>
<dbReference type="GO" id="GO:0016788">
    <property type="term" value="F:hydrolase activity, acting on ester bonds"/>
    <property type="evidence" value="ECO:0007669"/>
    <property type="project" value="InterPro"/>
</dbReference>
<dbReference type="GO" id="GO:0008270">
    <property type="term" value="F:zinc ion binding"/>
    <property type="evidence" value="ECO:0007669"/>
    <property type="project" value="InterPro"/>
</dbReference>
<dbReference type="GO" id="GO:0009056">
    <property type="term" value="P:catabolic process"/>
    <property type="evidence" value="ECO:0007669"/>
    <property type="project" value="InterPro"/>
</dbReference>
<dbReference type="CDD" id="cd00530">
    <property type="entry name" value="PTE"/>
    <property type="match status" value="1"/>
</dbReference>
<dbReference type="Gene3D" id="3.20.20.140">
    <property type="entry name" value="Metal-dependent hydrolases"/>
    <property type="match status" value="1"/>
</dbReference>
<dbReference type="InterPro" id="IPR017947">
    <property type="entry name" value="AryldialkylPase_Zn-BS"/>
</dbReference>
<dbReference type="InterPro" id="IPR032466">
    <property type="entry name" value="Metal_Hydrolase"/>
</dbReference>
<dbReference type="InterPro" id="IPR001559">
    <property type="entry name" value="Phosphotriesterase"/>
</dbReference>
<dbReference type="PANTHER" id="PTHR10819">
    <property type="entry name" value="PHOSPHOTRIESTERASE-RELATED"/>
    <property type="match status" value="1"/>
</dbReference>
<dbReference type="PANTHER" id="PTHR10819:SF3">
    <property type="entry name" value="PHOSPHOTRIESTERASE-RELATED PROTEIN"/>
    <property type="match status" value="1"/>
</dbReference>
<dbReference type="Pfam" id="PF02126">
    <property type="entry name" value="PTE"/>
    <property type="match status" value="1"/>
</dbReference>
<dbReference type="SUPFAM" id="SSF51556">
    <property type="entry name" value="Metallo-dependent hydrolases"/>
    <property type="match status" value="1"/>
</dbReference>
<dbReference type="PROSITE" id="PS01322">
    <property type="entry name" value="PHOSPHOTRIESTERASE_1"/>
    <property type="match status" value="1"/>
</dbReference>
<dbReference type="PROSITE" id="PS51347">
    <property type="entry name" value="PHOSPHOTRIESTERASE_2"/>
    <property type="match status" value="1"/>
</dbReference>
<gene>
    <name type="ORF">GG16392</name>
</gene>
<comment type="cofactor">
    <cofactor evidence="1">
        <name>a divalent metal cation</name>
        <dbReference type="ChEBI" id="CHEBI:60240"/>
    </cofactor>
    <text evidence="1">Binds 2 divalent metal cations per subunit.</text>
</comment>
<comment type="similarity">
    <text evidence="2">Belongs to the metallo-dependent hydrolases superfamily. Phosphotriesterase family.</text>
</comment>